<gene>
    <name evidence="1" type="primary">rpsP</name>
    <name type="ordered locus">BQ2027_MB2933C</name>
</gene>
<keyword id="KW-1185">Reference proteome</keyword>
<keyword id="KW-0687">Ribonucleoprotein</keyword>
<keyword id="KW-0689">Ribosomal protein</keyword>
<protein>
    <recommendedName>
        <fullName evidence="1">Small ribosomal subunit protein bS16</fullName>
    </recommendedName>
    <alternativeName>
        <fullName evidence="3">30S ribosomal protein S16</fullName>
    </alternativeName>
</protein>
<evidence type="ECO:0000255" key="1">
    <source>
        <dbReference type="HAMAP-Rule" id="MF_00385"/>
    </source>
</evidence>
<evidence type="ECO:0000256" key="2">
    <source>
        <dbReference type="SAM" id="MobiDB-lite"/>
    </source>
</evidence>
<evidence type="ECO:0000305" key="3"/>
<name>RS16_MYCBO</name>
<feature type="chain" id="PRO_0000167214" description="Small ribosomal subunit protein bS16">
    <location>
        <begin position="1"/>
        <end position="162"/>
    </location>
</feature>
<feature type="region of interest" description="Disordered" evidence="2">
    <location>
        <begin position="113"/>
        <end position="162"/>
    </location>
</feature>
<feature type="compositionally biased region" description="Basic residues" evidence="2">
    <location>
        <begin position="124"/>
        <end position="134"/>
    </location>
</feature>
<organism>
    <name type="scientific">Mycobacterium bovis (strain ATCC BAA-935 / AF2122/97)</name>
    <dbReference type="NCBI Taxonomy" id="233413"/>
    <lineage>
        <taxon>Bacteria</taxon>
        <taxon>Bacillati</taxon>
        <taxon>Actinomycetota</taxon>
        <taxon>Actinomycetes</taxon>
        <taxon>Mycobacteriales</taxon>
        <taxon>Mycobacteriaceae</taxon>
        <taxon>Mycobacterium</taxon>
        <taxon>Mycobacterium tuberculosis complex</taxon>
    </lineage>
</organism>
<proteinExistence type="inferred from homology"/>
<reference key="1">
    <citation type="journal article" date="2003" name="Proc. Natl. Acad. Sci. U.S.A.">
        <title>The complete genome sequence of Mycobacterium bovis.</title>
        <authorList>
            <person name="Garnier T."/>
            <person name="Eiglmeier K."/>
            <person name="Camus J.-C."/>
            <person name="Medina N."/>
            <person name="Mansoor H."/>
            <person name="Pryor M."/>
            <person name="Duthoy S."/>
            <person name="Grondin S."/>
            <person name="Lacroix C."/>
            <person name="Monsempe C."/>
            <person name="Simon S."/>
            <person name="Harris B."/>
            <person name="Atkin R."/>
            <person name="Doggett J."/>
            <person name="Mayes R."/>
            <person name="Keating L."/>
            <person name="Wheeler P.R."/>
            <person name="Parkhill J."/>
            <person name="Barrell B.G."/>
            <person name="Cole S.T."/>
            <person name="Gordon S.V."/>
            <person name="Hewinson R.G."/>
        </authorList>
    </citation>
    <scope>NUCLEOTIDE SEQUENCE [LARGE SCALE GENOMIC DNA]</scope>
    <source>
        <strain>ATCC BAA-935 / AF2122/97</strain>
    </source>
</reference>
<reference key="2">
    <citation type="journal article" date="2017" name="Genome Announc.">
        <title>Updated reference genome sequence and annotation of Mycobacterium bovis AF2122/97.</title>
        <authorList>
            <person name="Malone K.M."/>
            <person name="Farrell D."/>
            <person name="Stuber T.P."/>
            <person name="Schubert O.T."/>
            <person name="Aebersold R."/>
            <person name="Robbe-Austerman S."/>
            <person name="Gordon S.V."/>
        </authorList>
    </citation>
    <scope>NUCLEOTIDE SEQUENCE [LARGE SCALE GENOMIC DNA]</scope>
    <scope>GENOME REANNOTATION</scope>
    <source>
        <strain>ATCC BAA-935 / AF2122/97</strain>
    </source>
</reference>
<dbReference type="EMBL" id="LT708304">
    <property type="protein sequence ID" value="SIU01554.1"/>
    <property type="molecule type" value="Genomic_DNA"/>
</dbReference>
<dbReference type="RefSeq" id="NP_856578.1">
    <property type="nucleotide sequence ID" value="NC_002945.3"/>
</dbReference>
<dbReference type="RefSeq" id="WP_003414731.1">
    <property type="nucleotide sequence ID" value="NC_002945.4"/>
</dbReference>
<dbReference type="SMR" id="P66436"/>
<dbReference type="GeneID" id="45426896"/>
<dbReference type="KEGG" id="mbo:BQ2027_MB2933C"/>
<dbReference type="PATRIC" id="fig|233413.5.peg.3219"/>
<dbReference type="Proteomes" id="UP000001419">
    <property type="component" value="Chromosome"/>
</dbReference>
<dbReference type="GO" id="GO:0005737">
    <property type="term" value="C:cytoplasm"/>
    <property type="evidence" value="ECO:0007669"/>
    <property type="project" value="UniProtKB-ARBA"/>
</dbReference>
<dbReference type="GO" id="GO:0015935">
    <property type="term" value="C:small ribosomal subunit"/>
    <property type="evidence" value="ECO:0007669"/>
    <property type="project" value="TreeGrafter"/>
</dbReference>
<dbReference type="GO" id="GO:0003735">
    <property type="term" value="F:structural constituent of ribosome"/>
    <property type="evidence" value="ECO:0007669"/>
    <property type="project" value="InterPro"/>
</dbReference>
<dbReference type="GO" id="GO:0006412">
    <property type="term" value="P:translation"/>
    <property type="evidence" value="ECO:0007669"/>
    <property type="project" value="UniProtKB-UniRule"/>
</dbReference>
<dbReference type="FunFam" id="3.30.1320.10:FF:000009">
    <property type="entry name" value="30S ribosomal protein S16"/>
    <property type="match status" value="1"/>
</dbReference>
<dbReference type="Gene3D" id="3.30.1320.10">
    <property type="match status" value="1"/>
</dbReference>
<dbReference type="HAMAP" id="MF_00385">
    <property type="entry name" value="Ribosomal_bS16"/>
    <property type="match status" value="1"/>
</dbReference>
<dbReference type="InterPro" id="IPR000307">
    <property type="entry name" value="Ribosomal_bS16"/>
</dbReference>
<dbReference type="InterPro" id="IPR020592">
    <property type="entry name" value="Ribosomal_bS16_CS"/>
</dbReference>
<dbReference type="InterPro" id="IPR023803">
    <property type="entry name" value="Ribosomal_bS16_dom_sf"/>
</dbReference>
<dbReference type="NCBIfam" id="NF011093">
    <property type="entry name" value="PRK14520.1"/>
    <property type="match status" value="1"/>
</dbReference>
<dbReference type="NCBIfam" id="TIGR00002">
    <property type="entry name" value="S16"/>
    <property type="match status" value="1"/>
</dbReference>
<dbReference type="PANTHER" id="PTHR12919">
    <property type="entry name" value="30S RIBOSOMAL PROTEIN S16"/>
    <property type="match status" value="1"/>
</dbReference>
<dbReference type="PANTHER" id="PTHR12919:SF20">
    <property type="entry name" value="SMALL RIBOSOMAL SUBUNIT PROTEIN BS16M"/>
    <property type="match status" value="1"/>
</dbReference>
<dbReference type="Pfam" id="PF00886">
    <property type="entry name" value="Ribosomal_S16"/>
    <property type="match status" value="1"/>
</dbReference>
<dbReference type="SUPFAM" id="SSF54565">
    <property type="entry name" value="Ribosomal protein S16"/>
    <property type="match status" value="1"/>
</dbReference>
<dbReference type="PROSITE" id="PS00732">
    <property type="entry name" value="RIBOSOMAL_S16"/>
    <property type="match status" value="1"/>
</dbReference>
<comment type="similarity">
    <text evidence="1">Belongs to the bacterial ribosomal protein bS16 family.</text>
</comment>
<sequence length="162" mass="17437">MAVKIKLTRLGKIRNPQYRVAVADARTRRDGRAIEVIGRYHPKEEPSLIEINSERAQYWLSVGAQPTEPVLKLLKITGDWQKFKGLPGAQGRLKVAAPKPSKLEVFNAALAAADGGPTTEATKPKKKSPAKKAAKAAEPAPQPEQPDTPALGGEQAELTAES</sequence>
<accession>P66436</accession>
<accession>A0A1R3Y2K6</accession>
<accession>Q10795</accession>
<accession>X2BME7</accession>